<feature type="chain" id="PRO_0000356967" description="Kynureninase 1">
    <location>
        <begin position="1"/>
        <end position="472"/>
    </location>
</feature>
<feature type="binding site" evidence="1">
    <location>
        <position position="146"/>
    </location>
    <ligand>
        <name>pyridoxal 5'-phosphate</name>
        <dbReference type="ChEBI" id="CHEBI:597326"/>
    </ligand>
</feature>
<feature type="binding site" evidence="1">
    <location>
        <position position="147"/>
    </location>
    <ligand>
        <name>pyridoxal 5'-phosphate</name>
        <dbReference type="ChEBI" id="CHEBI:597326"/>
    </ligand>
</feature>
<feature type="binding site" evidence="1">
    <location>
        <begin position="174"/>
        <end position="177"/>
    </location>
    <ligand>
        <name>pyridoxal 5'-phosphate</name>
        <dbReference type="ChEBI" id="CHEBI:597326"/>
    </ligand>
</feature>
<feature type="binding site" evidence="1">
    <location>
        <position position="231"/>
    </location>
    <ligand>
        <name>pyridoxal 5'-phosphate</name>
        <dbReference type="ChEBI" id="CHEBI:597326"/>
    </ligand>
</feature>
<feature type="binding site" evidence="1">
    <location>
        <position position="260"/>
    </location>
    <ligand>
        <name>pyridoxal 5'-phosphate</name>
        <dbReference type="ChEBI" id="CHEBI:597326"/>
    </ligand>
</feature>
<feature type="binding site" evidence="1">
    <location>
        <position position="263"/>
    </location>
    <ligand>
        <name>pyridoxal 5'-phosphate</name>
        <dbReference type="ChEBI" id="CHEBI:597326"/>
    </ligand>
</feature>
<feature type="binding site" evidence="1">
    <location>
        <position position="285"/>
    </location>
    <ligand>
        <name>pyridoxal 5'-phosphate</name>
        <dbReference type="ChEBI" id="CHEBI:597326"/>
    </ligand>
</feature>
<feature type="binding site" evidence="1">
    <location>
        <position position="326"/>
    </location>
    <ligand>
        <name>pyridoxal 5'-phosphate</name>
        <dbReference type="ChEBI" id="CHEBI:597326"/>
    </ligand>
</feature>
<feature type="binding site" evidence="1">
    <location>
        <position position="354"/>
    </location>
    <ligand>
        <name>pyridoxal 5'-phosphate</name>
        <dbReference type="ChEBI" id="CHEBI:597326"/>
    </ligand>
</feature>
<feature type="modified residue" description="N6-(pyridoxal phosphate)lysine" evidence="1">
    <location>
        <position position="286"/>
    </location>
</feature>
<sequence length="472" mass="53008">MSSQLGHESSVSSPLSYKTDSNAFTREYAESLDAQDPLRDFRKEFIIPSKVDLKRKTLAIDDSSKDESDPRCIYLCGNSLGVQPRNARKYIDYYLRTWAIKGVTGHFLPHEDQLLPPFVDVDDAGAKLMAPIVGALESEVAVMGTLTANLHFLMASFYRPTQERYKIILEGKAFPSDHYAIESQIRHHNLRPEDAMVLIEPEDRLKPILRTEQILRVIDEHASSTALVLLSGIQFYTGQYFDIEKITAHAQSKGILVGWDCAHAAGNVDLRLHDWNVDFAAWCNYKYLNSGPGGMAALFVHERHGRVDMDKVGSDEEPFRPRLSGWWGGDKKTRFLMNNNFLPQTGAAGFQLSNPSVLDMNAVVASLELFNRTSMAEIRQKSLNATGYLEHLLLNYPADFSTGKRPFSIITPSNPAERGAQLSLLLEPGLLDSVLETLEEHGVVVDERKPDVIRVAPAPLYNTYTEYPTYRT</sequence>
<accession>A2R7T0</accession>
<name>KYNU1_ASPNC</name>
<evidence type="ECO:0000255" key="1">
    <source>
        <dbReference type="HAMAP-Rule" id="MF_03017"/>
    </source>
</evidence>
<dbReference type="EC" id="3.7.1.3" evidence="1"/>
<dbReference type="EMBL" id="AM270369">
    <property type="protein sequence ID" value="CAK42891.1"/>
    <property type="molecule type" value="Genomic_DNA"/>
</dbReference>
<dbReference type="RefSeq" id="XP_001397772.2">
    <property type="nucleotide sequence ID" value="XM_001397735.2"/>
</dbReference>
<dbReference type="SMR" id="A2R7T0"/>
<dbReference type="EnsemblFungi" id="CAK42891">
    <property type="protein sequence ID" value="CAK42891"/>
    <property type="gene ID" value="An16g04630"/>
</dbReference>
<dbReference type="GeneID" id="4988855"/>
<dbReference type="KEGG" id="ang:An16g04630"/>
<dbReference type="VEuPathDB" id="FungiDB:An16g04630"/>
<dbReference type="HOGENOM" id="CLU_003433_4_0_1"/>
<dbReference type="UniPathway" id="UPA00253">
    <property type="reaction ID" value="UER00329"/>
</dbReference>
<dbReference type="UniPathway" id="UPA00334">
    <property type="reaction ID" value="UER00455"/>
</dbReference>
<dbReference type="Proteomes" id="UP000006706">
    <property type="component" value="Chromosome 5R"/>
</dbReference>
<dbReference type="GO" id="GO:0005737">
    <property type="term" value="C:cytoplasm"/>
    <property type="evidence" value="ECO:0007669"/>
    <property type="project" value="UniProtKB-SubCell"/>
</dbReference>
<dbReference type="GO" id="GO:0030429">
    <property type="term" value="F:kynureninase activity"/>
    <property type="evidence" value="ECO:0007669"/>
    <property type="project" value="UniProtKB-UniRule"/>
</dbReference>
<dbReference type="GO" id="GO:0030170">
    <property type="term" value="F:pyridoxal phosphate binding"/>
    <property type="evidence" value="ECO:0007669"/>
    <property type="project" value="UniProtKB-UniRule"/>
</dbReference>
<dbReference type="GO" id="GO:0034354">
    <property type="term" value="P:'de novo' NAD biosynthetic process from L-tryptophan"/>
    <property type="evidence" value="ECO:0007669"/>
    <property type="project" value="UniProtKB-UniRule"/>
</dbReference>
<dbReference type="GO" id="GO:0043420">
    <property type="term" value="P:anthranilate metabolic process"/>
    <property type="evidence" value="ECO:0007669"/>
    <property type="project" value="UniProtKB-UniRule"/>
</dbReference>
<dbReference type="GO" id="GO:0097053">
    <property type="term" value="P:L-kynurenine catabolic process"/>
    <property type="evidence" value="ECO:0007669"/>
    <property type="project" value="UniProtKB-UniRule"/>
</dbReference>
<dbReference type="GO" id="GO:0019441">
    <property type="term" value="P:L-tryptophan catabolic process to kynurenine"/>
    <property type="evidence" value="ECO:0007669"/>
    <property type="project" value="TreeGrafter"/>
</dbReference>
<dbReference type="GO" id="GO:0019805">
    <property type="term" value="P:quinolinate biosynthetic process"/>
    <property type="evidence" value="ECO:0007669"/>
    <property type="project" value="UniProtKB-UniRule"/>
</dbReference>
<dbReference type="FunFam" id="3.40.640.10:FF:000031">
    <property type="entry name" value="Kynureninase"/>
    <property type="match status" value="1"/>
</dbReference>
<dbReference type="Gene3D" id="3.90.1150.10">
    <property type="entry name" value="Aspartate Aminotransferase, domain 1"/>
    <property type="match status" value="1"/>
</dbReference>
<dbReference type="Gene3D" id="3.40.640.10">
    <property type="entry name" value="Type I PLP-dependent aspartate aminotransferase-like (Major domain)"/>
    <property type="match status" value="1"/>
</dbReference>
<dbReference type="HAMAP" id="MF_01970">
    <property type="entry name" value="Kynureninase"/>
    <property type="match status" value="1"/>
</dbReference>
<dbReference type="InterPro" id="IPR010111">
    <property type="entry name" value="Kynureninase"/>
</dbReference>
<dbReference type="InterPro" id="IPR015424">
    <property type="entry name" value="PyrdxlP-dep_Trfase"/>
</dbReference>
<dbReference type="InterPro" id="IPR015421">
    <property type="entry name" value="PyrdxlP-dep_Trfase_major"/>
</dbReference>
<dbReference type="InterPro" id="IPR015422">
    <property type="entry name" value="PyrdxlP-dep_Trfase_small"/>
</dbReference>
<dbReference type="NCBIfam" id="TIGR01814">
    <property type="entry name" value="kynureninase"/>
    <property type="match status" value="1"/>
</dbReference>
<dbReference type="PANTHER" id="PTHR14084">
    <property type="entry name" value="KYNURENINASE"/>
    <property type="match status" value="1"/>
</dbReference>
<dbReference type="PANTHER" id="PTHR14084:SF0">
    <property type="entry name" value="KYNURENINASE"/>
    <property type="match status" value="1"/>
</dbReference>
<dbReference type="Pfam" id="PF22580">
    <property type="entry name" value="KYNU_C"/>
    <property type="match status" value="1"/>
</dbReference>
<dbReference type="PIRSF" id="PIRSF038800">
    <property type="entry name" value="KYNU"/>
    <property type="match status" value="1"/>
</dbReference>
<dbReference type="SUPFAM" id="SSF53383">
    <property type="entry name" value="PLP-dependent transferases"/>
    <property type="match status" value="1"/>
</dbReference>
<organism>
    <name type="scientific">Aspergillus niger (strain ATCC MYA-4892 / CBS 513.88 / FGSC A1513)</name>
    <dbReference type="NCBI Taxonomy" id="425011"/>
    <lineage>
        <taxon>Eukaryota</taxon>
        <taxon>Fungi</taxon>
        <taxon>Dikarya</taxon>
        <taxon>Ascomycota</taxon>
        <taxon>Pezizomycotina</taxon>
        <taxon>Eurotiomycetes</taxon>
        <taxon>Eurotiomycetidae</taxon>
        <taxon>Eurotiales</taxon>
        <taxon>Aspergillaceae</taxon>
        <taxon>Aspergillus</taxon>
        <taxon>Aspergillus subgen. Circumdati</taxon>
    </lineage>
</organism>
<proteinExistence type="inferred from homology"/>
<reference key="1">
    <citation type="journal article" date="2007" name="Nat. Biotechnol.">
        <title>Genome sequencing and analysis of the versatile cell factory Aspergillus niger CBS 513.88.</title>
        <authorList>
            <person name="Pel H.J."/>
            <person name="de Winde J.H."/>
            <person name="Archer D.B."/>
            <person name="Dyer P.S."/>
            <person name="Hofmann G."/>
            <person name="Schaap P.J."/>
            <person name="Turner G."/>
            <person name="de Vries R.P."/>
            <person name="Albang R."/>
            <person name="Albermann K."/>
            <person name="Andersen M.R."/>
            <person name="Bendtsen J.D."/>
            <person name="Benen J.A.E."/>
            <person name="van den Berg M."/>
            <person name="Breestraat S."/>
            <person name="Caddick M.X."/>
            <person name="Contreras R."/>
            <person name="Cornell M."/>
            <person name="Coutinho P.M."/>
            <person name="Danchin E.G.J."/>
            <person name="Debets A.J.M."/>
            <person name="Dekker P."/>
            <person name="van Dijck P.W.M."/>
            <person name="van Dijk A."/>
            <person name="Dijkhuizen L."/>
            <person name="Driessen A.J.M."/>
            <person name="d'Enfert C."/>
            <person name="Geysens S."/>
            <person name="Goosen C."/>
            <person name="Groot G.S.P."/>
            <person name="de Groot P.W.J."/>
            <person name="Guillemette T."/>
            <person name="Henrissat B."/>
            <person name="Herweijer M."/>
            <person name="van den Hombergh J.P.T.W."/>
            <person name="van den Hondel C.A.M.J.J."/>
            <person name="van der Heijden R.T.J.M."/>
            <person name="van der Kaaij R.M."/>
            <person name="Klis F.M."/>
            <person name="Kools H.J."/>
            <person name="Kubicek C.P."/>
            <person name="van Kuyk P.A."/>
            <person name="Lauber J."/>
            <person name="Lu X."/>
            <person name="van der Maarel M.J.E.C."/>
            <person name="Meulenberg R."/>
            <person name="Menke H."/>
            <person name="Mortimer M.A."/>
            <person name="Nielsen J."/>
            <person name="Oliver S.G."/>
            <person name="Olsthoorn M."/>
            <person name="Pal K."/>
            <person name="van Peij N.N.M.E."/>
            <person name="Ram A.F.J."/>
            <person name="Rinas U."/>
            <person name="Roubos J.A."/>
            <person name="Sagt C.M.J."/>
            <person name="Schmoll M."/>
            <person name="Sun J."/>
            <person name="Ussery D."/>
            <person name="Varga J."/>
            <person name="Vervecken W."/>
            <person name="van de Vondervoort P.J.J."/>
            <person name="Wedler H."/>
            <person name="Woesten H.A.B."/>
            <person name="Zeng A.-P."/>
            <person name="van Ooyen A.J.J."/>
            <person name="Visser J."/>
            <person name="Stam H."/>
        </authorList>
    </citation>
    <scope>NUCLEOTIDE SEQUENCE [LARGE SCALE GENOMIC DNA]</scope>
    <source>
        <strain>ATCC MYA-4892 / CBS 513.88 / FGSC A1513</strain>
    </source>
</reference>
<protein>
    <recommendedName>
        <fullName evidence="1">Kynureninase 1</fullName>
        <ecNumber evidence="1">3.7.1.3</ecNumber>
    </recommendedName>
    <alternativeName>
        <fullName evidence="1">Biosynthesis of nicotinic acid protein 5-1</fullName>
    </alternativeName>
    <alternativeName>
        <fullName evidence="1">L-kynurenine hydrolase 1</fullName>
    </alternativeName>
</protein>
<comment type="function">
    <text evidence="1">Catalyzes the cleavage of L-kynurenine (L-Kyn) and L-3-hydroxykynurenine (L-3OHKyn) into anthranilic acid (AA) and 3-hydroxyanthranilic acid (3-OHAA), respectively.</text>
</comment>
<comment type="catalytic activity">
    <reaction evidence="1">
        <text>L-kynurenine + H2O = anthranilate + L-alanine + H(+)</text>
        <dbReference type="Rhea" id="RHEA:16813"/>
        <dbReference type="ChEBI" id="CHEBI:15377"/>
        <dbReference type="ChEBI" id="CHEBI:15378"/>
        <dbReference type="ChEBI" id="CHEBI:16567"/>
        <dbReference type="ChEBI" id="CHEBI:57959"/>
        <dbReference type="ChEBI" id="CHEBI:57972"/>
        <dbReference type="EC" id="3.7.1.3"/>
    </reaction>
</comment>
<comment type="catalytic activity">
    <reaction evidence="1">
        <text>3-hydroxy-L-kynurenine + H2O = 3-hydroxyanthranilate + L-alanine + H(+)</text>
        <dbReference type="Rhea" id="RHEA:25143"/>
        <dbReference type="ChEBI" id="CHEBI:15377"/>
        <dbReference type="ChEBI" id="CHEBI:15378"/>
        <dbReference type="ChEBI" id="CHEBI:36559"/>
        <dbReference type="ChEBI" id="CHEBI:57972"/>
        <dbReference type="ChEBI" id="CHEBI:58125"/>
        <dbReference type="EC" id="3.7.1.3"/>
    </reaction>
</comment>
<comment type="cofactor">
    <cofactor evidence="1">
        <name>pyridoxal 5'-phosphate</name>
        <dbReference type="ChEBI" id="CHEBI:597326"/>
    </cofactor>
</comment>
<comment type="pathway">
    <text evidence="1">Amino-acid degradation; L-kynurenine degradation; L-alanine and anthranilate from L-kynurenine: step 1/1.</text>
</comment>
<comment type="pathway">
    <text evidence="1">Cofactor biosynthesis; NAD(+) biosynthesis; quinolinate from L-kynurenine: step 2/3.</text>
</comment>
<comment type="subunit">
    <text evidence="1">Homodimer.</text>
</comment>
<comment type="subcellular location">
    <subcellularLocation>
        <location evidence="1">Cytoplasm</location>
    </subcellularLocation>
</comment>
<comment type="similarity">
    <text evidence="1">Belongs to the kynureninase family.</text>
</comment>
<keyword id="KW-0963">Cytoplasm</keyword>
<keyword id="KW-0378">Hydrolase</keyword>
<keyword id="KW-0662">Pyridine nucleotide biosynthesis</keyword>
<keyword id="KW-0663">Pyridoxal phosphate</keyword>
<keyword id="KW-1185">Reference proteome</keyword>
<gene>
    <name type="primary">bna5-1</name>
    <name type="ORF">An16g04630</name>
</gene>